<keyword id="KW-0002">3D-structure</keyword>
<keyword id="KW-1185">Reference proteome</keyword>
<keyword id="KW-0732">Signal</keyword>
<reference key="1">
    <citation type="journal article" date="1997" name="Microbiology">
        <title>Nucleotide sequence and analysis of the phoB-rrnE-groESL region of the Bacillus subtilis chromosome.</title>
        <authorList>
            <person name="Sadaie Y."/>
            <person name="Yata K."/>
            <person name="Fujita M."/>
            <person name="Sagai H."/>
            <person name="Itaya M."/>
            <person name="Kasahara Y."/>
            <person name="Ogasawara N."/>
        </authorList>
    </citation>
    <scope>NUCLEOTIDE SEQUENCE [GENOMIC DNA]</scope>
    <source>
        <strain>168 / JH642</strain>
    </source>
</reference>
<reference key="2">
    <citation type="journal article" date="1997" name="Nature">
        <title>The complete genome sequence of the Gram-positive bacterium Bacillus subtilis.</title>
        <authorList>
            <person name="Kunst F."/>
            <person name="Ogasawara N."/>
            <person name="Moszer I."/>
            <person name="Albertini A.M."/>
            <person name="Alloni G."/>
            <person name="Azevedo V."/>
            <person name="Bertero M.G."/>
            <person name="Bessieres P."/>
            <person name="Bolotin A."/>
            <person name="Borchert S."/>
            <person name="Borriss R."/>
            <person name="Boursier L."/>
            <person name="Brans A."/>
            <person name="Braun M."/>
            <person name="Brignell S.C."/>
            <person name="Bron S."/>
            <person name="Brouillet S."/>
            <person name="Bruschi C.V."/>
            <person name="Caldwell B."/>
            <person name="Capuano V."/>
            <person name="Carter N.M."/>
            <person name="Choi S.-K."/>
            <person name="Codani J.-J."/>
            <person name="Connerton I.F."/>
            <person name="Cummings N.J."/>
            <person name="Daniel R.A."/>
            <person name="Denizot F."/>
            <person name="Devine K.M."/>
            <person name="Duesterhoeft A."/>
            <person name="Ehrlich S.D."/>
            <person name="Emmerson P.T."/>
            <person name="Entian K.-D."/>
            <person name="Errington J."/>
            <person name="Fabret C."/>
            <person name="Ferrari E."/>
            <person name="Foulger D."/>
            <person name="Fritz C."/>
            <person name="Fujita M."/>
            <person name="Fujita Y."/>
            <person name="Fuma S."/>
            <person name="Galizzi A."/>
            <person name="Galleron N."/>
            <person name="Ghim S.-Y."/>
            <person name="Glaser P."/>
            <person name="Goffeau A."/>
            <person name="Golightly E.J."/>
            <person name="Grandi G."/>
            <person name="Guiseppi G."/>
            <person name="Guy B.J."/>
            <person name="Haga K."/>
            <person name="Haiech J."/>
            <person name="Harwood C.R."/>
            <person name="Henaut A."/>
            <person name="Hilbert H."/>
            <person name="Holsappel S."/>
            <person name="Hosono S."/>
            <person name="Hullo M.-F."/>
            <person name="Itaya M."/>
            <person name="Jones L.-M."/>
            <person name="Joris B."/>
            <person name="Karamata D."/>
            <person name="Kasahara Y."/>
            <person name="Klaerr-Blanchard M."/>
            <person name="Klein C."/>
            <person name="Kobayashi Y."/>
            <person name="Koetter P."/>
            <person name="Koningstein G."/>
            <person name="Krogh S."/>
            <person name="Kumano M."/>
            <person name="Kurita K."/>
            <person name="Lapidus A."/>
            <person name="Lardinois S."/>
            <person name="Lauber J."/>
            <person name="Lazarevic V."/>
            <person name="Lee S.-M."/>
            <person name="Levine A."/>
            <person name="Liu H."/>
            <person name="Masuda S."/>
            <person name="Mauel C."/>
            <person name="Medigue C."/>
            <person name="Medina N."/>
            <person name="Mellado R.P."/>
            <person name="Mizuno M."/>
            <person name="Moestl D."/>
            <person name="Nakai S."/>
            <person name="Noback M."/>
            <person name="Noone D."/>
            <person name="O'Reilly M."/>
            <person name="Ogawa K."/>
            <person name="Ogiwara A."/>
            <person name="Oudega B."/>
            <person name="Park S.-H."/>
            <person name="Parro V."/>
            <person name="Pohl T.M."/>
            <person name="Portetelle D."/>
            <person name="Porwollik S."/>
            <person name="Prescott A.M."/>
            <person name="Presecan E."/>
            <person name="Pujic P."/>
            <person name="Purnelle B."/>
            <person name="Rapoport G."/>
            <person name="Rey M."/>
            <person name="Reynolds S."/>
            <person name="Rieger M."/>
            <person name="Rivolta C."/>
            <person name="Rocha E."/>
            <person name="Roche B."/>
            <person name="Rose M."/>
            <person name="Sadaie Y."/>
            <person name="Sato T."/>
            <person name="Scanlan E."/>
            <person name="Schleich S."/>
            <person name="Schroeter R."/>
            <person name="Scoffone F."/>
            <person name="Sekiguchi J."/>
            <person name="Sekowska A."/>
            <person name="Seror S.J."/>
            <person name="Serror P."/>
            <person name="Shin B.-S."/>
            <person name="Soldo B."/>
            <person name="Sorokin A."/>
            <person name="Tacconi E."/>
            <person name="Takagi T."/>
            <person name="Takahashi H."/>
            <person name="Takemaru K."/>
            <person name="Takeuchi M."/>
            <person name="Tamakoshi A."/>
            <person name="Tanaka T."/>
            <person name="Terpstra P."/>
            <person name="Tognoni A."/>
            <person name="Tosato V."/>
            <person name="Uchiyama S."/>
            <person name="Vandenbol M."/>
            <person name="Vannier F."/>
            <person name="Vassarotti A."/>
            <person name="Viari A."/>
            <person name="Wambutt R."/>
            <person name="Wedler E."/>
            <person name="Wedler H."/>
            <person name="Weitzenegger T."/>
            <person name="Winters P."/>
            <person name="Wipat A."/>
            <person name="Yamamoto H."/>
            <person name="Yamane K."/>
            <person name="Yasumoto K."/>
            <person name="Yata K."/>
            <person name="Yoshida K."/>
            <person name="Yoshikawa H.-F."/>
            <person name="Zumstein E."/>
            <person name="Yoshikawa H."/>
            <person name="Danchin A."/>
        </authorList>
    </citation>
    <scope>NUCLEOTIDE SEQUENCE [LARGE SCALE GENOMIC DNA]</scope>
    <source>
        <strain>168</strain>
    </source>
</reference>
<feature type="signal peptide" evidence="1">
    <location>
        <begin position="1"/>
        <end position="40"/>
    </location>
</feature>
<feature type="chain" id="PRO_0000359907" description="Uncharacterized protein YdhK">
    <location>
        <begin position="41"/>
        <end position="205"/>
    </location>
</feature>
<feature type="region of interest" description="Disordered" evidence="2">
    <location>
        <begin position="44"/>
        <end position="82"/>
    </location>
</feature>
<feature type="compositionally biased region" description="Basic and acidic residues" evidence="2">
    <location>
        <begin position="47"/>
        <end position="66"/>
    </location>
</feature>
<feature type="helix" evidence="5">
    <location>
        <begin position="60"/>
        <end position="63"/>
    </location>
</feature>
<feature type="strand" evidence="4">
    <location>
        <begin position="87"/>
        <end position="90"/>
    </location>
</feature>
<feature type="helix" evidence="3">
    <location>
        <begin position="96"/>
        <end position="98"/>
    </location>
</feature>
<feature type="strand" evidence="4">
    <location>
        <begin position="102"/>
        <end position="118"/>
    </location>
</feature>
<feature type="turn" evidence="3">
    <location>
        <begin position="121"/>
        <end position="123"/>
    </location>
</feature>
<feature type="strand" evidence="4">
    <location>
        <begin position="127"/>
        <end position="134"/>
    </location>
</feature>
<feature type="helix" evidence="4">
    <location>
        <begin position="135"/>
        <end position="137"/>
    </location>
</feature>
<feature type="turn" evidence="3">
    <location>
        <begin position="140"/>
        <end position="143"/>
    </location>
</feature>
<feature type="strand" evidence="4">
    <location>
        <begin position="151"/>
        <end position="154"/>
    </location>
</feature>
<feature type="strand" evidence="4">
    <location>
        <begin position="166"/>
        <end position="183"/>
    </location>
</feature>
<feature type="turn" evidence="4">
    <location>
        <begin position="185"/>
        <end position="187"/>
    </location>
</feature>
<feature type="strand" evidence="4">
    <location>
        <begin position="190"/>
        <end position="198"/>
    </location>
</feature>
<feature type="helix" evidence="4">
    <location>
        <begin position="199"/>
        <end position="201"/>
    </location>
</feature>
<feature type="strand" evidence="5">
    <location>
        <begin position="202"/>
        <end position="204"/>
    </location>
</feature>
<protein>
    <recommendedName>
        <fullName>Uncharacterized protein YdhK</fullName>
    </recommendedName>
</protein>
<accession>O05503</accession>
<accession>Q797E4</accession>
<sequence length="205" mass="22536">MSAGKSYRKKMKQRRMNMKISKYALGILMLSLVFVLSACGNNNSTKESTHDNHSDSSTHEEMDHSGSADVPEGLQESKNPKYKVGSQVIINTSHMKGMKGAEATVTGAYDTTAYVVSYTPTNGGQRVDHHKWVIQEEIKDAGDKTLQPGDQVILEASHMKGMKGATAEIDSAEKTTVYMVDYTSTTSGEKVKNHKWVTEDELSAK</sequence>
<name>YDHK_BACSU</name>
<gene>
    <name type="primary">ydhK</name>
    <name type="ordered locus">BSU05790</name>
</gene>
<proteinExistence type="evidence at protein level"/>
<evidence type="ECO:0000255" key="1"/>
<evidence type="ECO:0000256" key="2">
    <source>
        <dbReference type="SAM" id="MobiDB-lite"/>
    </source>
</evidence>
<evidence type="ECO:0007829" key="3">
    <source>
        <dbReference type="PDB" id="2KY9"/>
    </source>
</evidence>
<evidence type="ECO:0007829" key="4">
    <source>
        <dbReference type="PDB" id="4FIB"/>
    </source>
</evidence>
<evidence type="ECO:0007829" key="5">
    <source>
        <dbReference type="PDB" id="4MDW"/>
    </source>
</evidence>
<organism>
    <name type="scientific">Bacillus subtilis (strain 168)</name>
    <dbReference type="NCBI Taxonomy" id="224308"/>
    <lineage>
        <taxon>Bacteria</taxon>
        <taxon>Bacillati</taxon>
        <taxon>Bacillota</taxon>
        <taxon>Bacilli</taxon>
        <taxon>Bacillales</taxon>
        <taxon>Bacillaceae</taxon>
        <taxon>Bacillus</taxon>
    </lineage>
</organism>
<dbReference type="EMBL" id="D88802">
    <property type="protein sequence ID" value="BAA19703.1"/>
    <property type="molecule type" value="Genomic_DNA"/>
</dbReference>
<dbReference type="EMBL" id="AL009126">
    <property type="protein sequence ID" value="CAB12398.1"/>
    <property type="molecule type" value="Genomic_DNA"/>
</dbReference>
<dbReference type="PIR" id="G69784">
    <property type="entry name" value="G69784"/>
</dbReference>
<dbReference type="RefSeq" id="NP_388460.1">
    <property type="nucleotide sequence ID" value="NC_000964.3"/>
</dbReference>
<dbReference type="RefSeq" id="WP_003242997.1">
    <property type="nucleotide sequence ID" value="NZ_OZ025638.1"/>
</dbReference>
<dbReference type="PDB" id="2KY9">
    <property type="method" value="NMR"/>
    <property type="chains" value="A=83-205"/>
</dbReference>
<dbReference type="PDB" id="4FIB">
    <property type="method" value="X-ray"/>
    <property type="resolution" value="2.00 A"/>
    <property type="chains" value="A/B/C=83-202"/>
</dbReference>
<dbReference type="PDB" id="4MDW">
    <property type="method" value="X-ray"/>
    <property type="resolution" value="2.00 A"/>
    <property type="chains" value="A=41-205"/>
</dbReference>
<dbReference type="PDBsum" id="2KY9"/>
<dbReference type="PDBsum" id="4FIB"/>
<dbReference type="PDBsum" id="4MDW"/>
<dbReference type="SMR" id="O05503"/>
<dbReference type="FunCoup" id="O05503">
    <property type="interactions" value="17"/>
</dbReference>
<dbReference type="STRING" id="224308.BSU05790"/>
<dbReference type="PaxDb" id="224308-BSU05790"/>
<dbReference type="DNASU" id="939873"/>
<dbReference type="EnsemblBacteria" id="CAB12398">
    <property type="protein sequence ID" value="CAB12398"/>
    <property type="gene ID" value="BSU_05790"/>
</dbReference>
<dbReference type="GeneID" id="939873"/>
<dbReference type="KEGG" id="bsu:BSU05790"/>
<dbReference type="PATRIC" id="fig|224308.43.peg.608"/>
<dbReference type="eggNOG" id="COG1388">
    <property type="taxonomic scope" value="Bacteria"/>
</dbReference>
<dbReference type="InParanoid" id="O05503"/>
<dbReference type="OrthoDB" id="1701949at2"/>
<dbReference type="PhylomeDB" id="O05503"/>
<dbReference type="BioCyc" id="BSUB:BSU05790-MONOMER"/>
<dbReference type="EvolutionaryTrace" id="O05503"/>
<dbReference type="Proteomes" id="UP000001570">
    <property type="component" value="Chromosome"/>
</dbReference>
<dbReference type="Gene3D" id="2.30.30.1210">
    <property type="entry name" value="Domain of unknown function DUF1541"/>
    <property type="match status" value="1"/>
</dbReference>
<dbReference type="InterPro" id="IPR011438">
    <property type="entry name" value="DUF1541"/>
</dbReference>
<dbReference type="Pfam" id="PF07563">
    <property type="entry name" value="DUF1541"/>
    <property type="match status" value="2"/>
</dbReference>